<evidence type="ECO:0000255" key="1">
    <source>
        <dbReference type="HAMAP-Rule" id="MF_01576"/>
    </source>
</evidence>
<gene>
    <name evidence="1" type="primary">folD</name>
    <name type="ordered locus">EcHS_A0603</name>
</gene>
<proteinExistence type="inferred from homology"/>
<name>FOLD_ECOHS</name>
<sequence>MAAKIIDGKTIAQQVRSEVAQKVQARIAAGLRAPGLAVVLVGSNPASQIYVASKRKACEEVGFVSRSYDLPETTSEAELLELIDALNADNTIDGILVQLPLPAGIDNVKVLERIHPDKDVDGFHPYNVGRLCQRAPRLRPCTPRGIVTLLERYNIDTFGLNAVVIGASNIVGRPMSMELLLAGCTTTVTHRFTKNLRHHVENADLLIVAVGKPGFIPGDWIKEGAIVIDVGINRLENGKVVGDVVFEDAAKRASYITPVPGGVGPMTVATLIENTLQACVEYHDPQGE</sequence>
<feature type="chain" id="PRO_1000069241" description="Bifunctional protein FolD">
    <location>
        <begin position="1"/>
        <end position="288"/>
    </location>
</feature>
<feature type="binding site" evidence="1">
    <location>
        <begin position="166"/>
        <end position="168"/>
    </location>
    <ligand>
        <name>NADP(+)</name>
        <dbReference type="ChEBI" id="CHEBI:58349"/>
    </ligand>
</feature>
<feature type="binding site" evidence="1">
    <location>
        <position position="232"/>
    </location>
    <ligand>
        <name>NADP(+)</name>
        <dbReference type="ChEBI" id="CHEBI:58349"/>
    </ligand>
</feature>
<keyword id="KW-0028">Amino-acid biosynthesis</keyword>
<keyword id="KW-0368">Histidine biosynthesis</keyword>
<keyword id="KW-0378">Hydrolase</keyword>
<keyword id="KW-0486">Methionine biosynthesis</keyword>
<keyword id="KW-0511">Multifunctional enzyme</keyword>
<keyword id="KW-0521">NADP</keyword>
<keyword id="KW-0554">One-carbon metabolism</keyword>
<keyword id="KW-0560">Oxidoreductase</keyword>
<keyword id="KW-0658">Purine biosynthesis</keyword>
<protein>
    <recommendedName>
        <fullName evidence="1">Bifunctional protein FolD</fullName>
    </recommendedName>
    <domain>
        <recommendedName>
            <fullName evidence="1">Methylenetetrahydrofolate dehydrogenase</fullName>
            <ecNumber evidence="1">1.5.1.5</ecNumber>
        </recommendedName>
    </domain>
    <domain>
        <recommendedName>
            <fullName evidence="1">Methenyltetrahydrofolate cyclohydrolase</fullName>
            <ecNumber evidence="1">3.5.4.9</ecNumber>
        </recommendedName>
    </domain>
</protein>
<dbReference type="EC" id="1.5.1.5" evidence="1"/>
<dbReference type="EC" id="3.5.4.9" evidence="1"/>
<dbReference type="EMBL" id="CP000802">
    <property type="protein sequence ID" value="ABV04987.1"/>
    <property type="molecule type" value="Genomic_DNA"/>
</dbReference>
<dbReference type="RefSeq" id="WP_000729155.1">
    <property type="nucleotide sequence ID" value="NC_009800.1"/>
</dbReference>
<dbReference type="SMR" id="A7ZXI3"/>
<dbReference type="GeneID" id="93776949"/>
<dbReference type="KEGG" id="ecx:EcHS_A0603"/>
<dbReference type="HOGENOM" id="CLU_034045_2_1_6"/>
<dbReference type="UniPathway" id="UPA00193"/>
<dbReference type="GO" id="GO:0005829">
    <property type="term" value="C:cytosol"/>
    <property type="evidence" value="ECO:0007669"/>
    <property type="project" value="TreeGrafter"/>
</dbReference>
<dbReference type="GO" id="GO:0004477">
    <property type="term" value="F:methenyltetrahydrofolate cyclohydrolase activity"/>
    <property type="evidence" value="ECO:0007669"/>
    <property type="project" value="UniProtKB-UniRule"/>
</dbReference>
<dbReference type="GO" id="GO:0004488">
    <property type="term" value="F:methylenetetrahydrofolate dehydrogenase (NADP+) activity"/>
    <property type="evidence" value="ECO:0007669"/>
    <property type="project" value="UniProtKB-UniRule"/>
</dbReference>
<dbReference type="GO" id="GO:0000105">
    <property type="term" value="P:L-histidine biosynthetic process"/>
    <property type="evidence" value="ECO:0007669"/>
    <property type="project" value="UniProtKB-KW"/>
</dbReference>
<dbReference type="GO" id="GO:0009086">
    <property type="term" value="P:methionine biosynthetic process"/>
    <property type="evidence" value="ECO:0007669"/>
    <property type="project" value="UniProtKB-KW"/>
</dbReference>
<dbReference type="GO" id="GO:0006164">
    <property type="term" value="P:purine nucleotide biosynthetic process"/>
    <property type="evidence" value="ECO:0007669"/>
    <property type="project" value="UniProtKB-KW"/>
</dbReference>
<dbReference type="GO" id="GO:0035999">
    <property type="term" value="P:tetrahydrofolate interconversion"/>
    <property type="evidence" value="ECO:0007669"/>
    <property type="project" value="UniProtKB-UniRule"/>
</dbReference>
<dbReference type="CDD" id="cd01080">
    <property type="entry name" value="NAD_bind_m-THF_DH_Cyclohyd"/>
    <property type="match status" value="1"/>
</dbReference>
<dbReference type="FunFam" id="3.40.50.10860:FF:000001">
    <property type="entry name" value="Bifunctional protein FolD"/>
    <property type="match status" value="1"/>
</dbReference>
<dbReference type="FunFam" id="3.40.50.720:FF:000006">
    <property type="entry name" value="Bifunctional protein FolD"/>
    <property type="match status" value="1"/>
</dbReference>
<dbReference type="Gene3D" id="3.40.50.10860">
    <property type="entry name" value="Leucine Dehydrogenase, chain A, domain 1"/>
    <property type="match status" value="1"/>
</dbReference>
<dbReference type="Gene3D" id="3.40.50.720">
    <property type="entry name" value="NAD(P)-binding Rossmann-like Domain"/>
    <property type="match status" value="1"/>
</dbReference>
<dbReference type="HAMAP" id="MF_01576">
    <property type="entry name" value="THF_DHG_CYH"/>
    <property type="match status" value="1"/>
</dbReference>
<dbReference type="InterPro" id="IPR046346">
    <property type="entry name" value="Aminoacid_DH-like_N_sf"/>
</dbReference>
<dbReference type="InterPro" id="IPR036291">
    <property type="entry name" value="NAD(P)-bd_dom_sf"/>
</dbReference>
<dbReference type="InterPro" id="IPR000672">
    <property type="entry name" value="THF_DH/CycHdrlase"/>
</dbReference>
<dbReference type="InterPro" id="IPR020630">
    <property type="entry name" value="THF_DH/CycHdrlase_cat_dom"/>
</dbReference>
<dbReference type="InterPro" id="IPR020867">
    <property type="entry name" value="THF_DH/CycHdrlase_CS"/>
</dbReference>
<dbReference type="InterPro" id="IPR020631">
    <property type="entry name" value="THF_DH/CycHdrlase_NAD-bd_dom"/>
</dbReference>
<dbReference type="NCBIfam" id="NF008058">
    <property type="entry name" value="PRK10792.1"/>
    <property type="match status" value="1"/>
</dbReference>
<dbReference type="NCBIfam" id="NF010783">
    <property type="entry name" value="PRK14186.1"/>
    <property type="match status" value="1"/>
</dbReference>
<dbReference type="PANTHER" id="PTHR48099:SF5">
    <property type="entry name" value="C-1-TETRAHYDROFOLATE SYNTHASE, CYTOPLASMIC"/>
    <property type="match status" value="1"/>
</dbReference>
<dbReference type="PANTHER" id="PTHR48099">
    <property type="entry name" value="C-1-TETRAHYDROFOLATE SYNTHASE, CYTOPLASMIC-RELATED"/>
    <property type="match status" value="1"/>
</dbReference>
<dbReference type="Pfam" id="PF00763">
    <property type="entry name" value="THF_DHG_CYH"/>
    <property type="match status" value="1"/>
</dbReference>
<dbReference type="Pfam" id="PF02882">
    <property type="entry name" value="THF_DHG_CYH_C"/>
    <property type="match status" value="1"/>
</dbReference>
<dbReference type="PRINTS" id="PR00085">
    <property type="entry name" value="THFDHDRGNASE"/>
</dbReference>
<dbReference type="SUPFAM" id="SSF53223">
    <property type="entry name" value="Aminoacid dehydrogenase-like, N-terminal domain"/>
    <property type="match status" value="1"/>
</dbReference>
<dbReference type="SUPFAM" id="SSF51735">
    <property type="entry name" value="NAD(P)-binding Rossmann-fold domains"/>
    <property type="match status" value="1"/>
</dbReference>
<dbReference type="PROSITE" id="PS00766">
    <property type="entry name" value="THF_DHG_CYH_1"/>
    <property type="match status" value="1"/>
</dbReference>
<dbReference type="PROSITE" id="PS00767">
    <property type="entry name" value="THF_DHG_CYH_2"/>
    <property type="match status" value="1"/>
</dbReference>
<comment type="function">
    <text evidence="1">Catalyzes the oxidation of 5,10-methylenetetrahydrofolate to 5,10-methenyltetrahydrofolate and then the hydrolysis of 5,10-methenyltetrahydrofolate to 10-formyltetrahydrofolate.</text>
</comment>
<comment type="catalytic activity">
    <reaction evidence="1">
        <text>(6R)-5,10-methylene-5,6,7,8-tetrahydrofolate + NADP(+) = (6R)-5,10-methenyltetrahydrofolate + NADPH</text>
        <dbReference type="Rhea" id="RHEA:22812"/>
        <dbReference type="ChEBI" id="CHEBI:15636"/>
        <dbReference type="ChEBI" id="CHEBI:57455"/>
        <dbReference type="ChEBI" id="CHEBI:57783"/>
        <dbReference type="ChEBI" id="CHEBI:58349"/>
        <dbReference type="EC" id="1.5.1.5"/>
    </reaction>
</comment>
<comment type="catalytic activity">
    <reaction evidence="1">
        <text>(6R)-5,10-methenyltetrahydrofolate + H2O = (6R)-10-formyltetrahydrofolate + H(+)</text>
        <dbReference type="Rhea" id="RHEA:23700"/>
        <dbReference type="ChEBI" id="CHEBI:15377"/>
        <dbReference type="ChEBI" id="CHEBI:15378"/>
        <dbReference type="ChEBI" id="CHEBI:57455"/>
        <dbReference type="ChEBI" id="CHEBI:195366"/>
        <dbReference type="EC" id="3.5.4.9"/>
    </reaction>
</comment>
<comment type="pathway">
    <text evidence="1">One-carbon metabolism; tetrahydrofolate interconversion.</text>
</comment>
<comment type="subunit">
    <text evidence="1">Homodimer.</text>
</comment>
<comment type="similarity">
    <text evidence="1">Belongs to the tetrahydrofolate dehydrogenase/cyclohydrolase family.</text>
</comment>
<reference key="1">
    <citation type="journal article" date="2008" name="J. Bacteriol.">
        <title>The pangenome structure of Escherichia coli: comparative genomic analysis of E. coli commensal and pathogenic isolates.</title>
        <authorList>
            <person name="Rasko D.A."/>
            <person name="Rosovitz M.J."/>
            <person name="Myers G.S.A."/>
            <person name="Mongodin E.F."/>
            <person name="Fricke W.F."/>
            <person name="Gajer P."/>
            <person name="Crabtree J."/>
            <person name="Sebaihia M."/>
            <person name="Thomson N.R."/>
            <person name="Chaudhuri R."/>
            <person name="Henderson I.R."/>
            <person name="Sperandio V."/>
            <person name="Ravel J."/>
        </authorList>
    </citation>
    <scope>NUCLEOTIDE SEQUENCE [LARGE SCALE GENOMIC DNA]</scope>
    <source>
        <strain>HS</strain>
    </source>
</reference>
<organism>
    <name type="scientific">Escherichia coli O9:H4 (strain HS)</name>
    <dbReference type="NCBI Taxonomy" id="331112"/>
    <lineage>
        <taxon>Bacteria</taxon>
        <taxon>Pseudomonadati</taxon>
        <taxon>Pseudomonadota</taxon>
        <taxon>Gammaproteobacteria</taxon>
        <taxon>Enterobacterales</taxon>
        <taxon>Enterobacteriaceae</taxon>
        <taxon>Escherichia</taxon>
    </lineage>
</organism>
<accession>A7ZXI3</accession>